<feature type="chain" id="PRO_0000053590" description="Nuclear receptor subfamily 2 group C member 2">
    <location>
        <begin position="1"/>
        <end position="596"/>
    </location>
</feature>
<feature type="domain" description="NR LBD" evidence="5">
    <location>
        <begin position="341"/>
        <end position="583"/>
    </location>
</feature>
<feature type="DNA-binding region" description="Nuclear receptor" evidence="4">
    <location>
        <begin position="114"/>
        <end position="189"/>
    </location>
</feature>
<feature type="zinc finger region" description="NR C4-type" evidence="4">
    <location>
        <begin position="117"/>
        <end position="137"/>
    </location>
</feature>
<feature type="zinc finger region" description="NR C4-type" evidence="4">
    <location>
        <begin position="153"/>
        <end position="177"/>
    </location>
</feature>
<feature type="modified residue" description="Phosphoserine; by MAPK" evidence="2">
    <location>
        <position position="19"/>
    </location>
</feature>
<feature type="modified residue" description="Phosphoserine" evidence="2">
    <location>
        <position position="46"/>
    </location>
</feature>
<feature type="modified residue" description="Phosphoserine; by MAPK" evidence="3">
    <location>
        <position position="55"/>
    </location>
</feature>
<feature type="modified residue" description="Phosphoserine; by MAPK" evidence="2">
    <location>
        <position position="68"/>
    </location>
</feature>
<feature type="modified residue" description="Phosphoserine" evidence="2">
    <location>
        <position position="98"/>
    </location>
</feature>
<feature type="modified residue" description="Phosphoserine" evidence="9">
    <location>
        <position position="219"/>
    </location>
</feature>
<feature type="modified residue" description="N6-acetyllysine" evidence="3">
    <location>
        <position position="231"/>
    </location>
</feature>
<feature type="cross-link" description="Glycyl lysine isopeptide (Lys-Gly) (interchain with G-Cter in SUMO2)" evidence="2">
    <location>
        <position position="192"/>
    </location>
</feature>
<organism>
    <name type="scientific">Rattus norvegicus</name>
    <name type="common">Rat</name>
    <dbReference type="NCBI Taxonomy" id="10116"/>
    <lineage>
        <taxon>Eukaryota</taxon>
        <taxon>Metazoa</taxon>
        <taxon>Chordata</taxon>
        <taxon>Craniata</taxon>
        <taxon>Vertebrata</taxon>
        <taxon>Euteleostomi</taxon>
        <taxon>Mammalia</taxon>
        <taxon>Eutheria</taxon>
        <taxon>Euarchontoglires</taxon>
        <taxon>Glires</taxon>
        <taxon>Rodentia</taxon>
        <taxon>Myomorpha</taxon>
        <taxon>Muroidea</taxon>
        <taxon>Muridae</taxon>
        <taxon>Murinae</taxon>
        <taxon>Rattus</taxon>
    </lineage>
</organism>
<accession>P55094</accession>
<reference key="1">
    <citation type="journal article" date="1994" name="Proc. Natl. Acad. Sci. U.S.A.">
        <title>Human and rat TR4 orphan receptors specify a subclass of the steroid receptor superfamily.</title>
        <authorList>
            <person name="Chang C."/>
            <person name="da Silva S.L."/>
            <person name="Ideta R."/>
            <person name="Lee Y."/>
            <person name="Yeh S."/>
            <person name="Burbach J.P."/>
        </authorList>
    </citation>
    <scope>NUCLEOTIDE SEQUENCE [MRNA]</scope>
    <scope>TISSUE SPECIFICITY</scope>
    <source>
        <strain>Wistar</strain>
        <tissue>Hypothalamus</tissue>
        <tissue>Prostate</tissue>
    </source>
</reference>
<reference key="2">
    <citation type="journal article" date="1998" name="J. Biol. Chem.">
        <title>Regulation of peroxisome proliferator-activated receptor alpha-induced transactivation by the nuclear orphan receptor TAK1/TR4.</title>
        <authorList>
            <person name="Yan Z.H."/>
            <person name="Karam W.G."/>
            <person name="Staudinger J.L."/>
            <person name="Medvedev A."/>
            <person name="Ghanayem B.I."/>
            <person name="Jetten A.M."/>
        </authorList>
    </citation>
    <scope>TISSUE SPECIFICITY</scope>
</reference>
<reference key="3">
    <citation type="journal article" date="2012" name="Nat. Commun.">
        <title>Quantitative maps of protein phosphorylation sites across 14 different rat organs and tissues.</title>
        <authorList>
            <person name="Lundby A."/>
            <person name="Secher A."/>
            <person name="Lage K."/>
            <person name="Nordsborg N.B."/>
            <person name="Dmytriyev A."/>
            <person name="Lundby C."/>
            <person name="Olsen J.V."/>
        </authorList>
    </citation>
    <scope>PHOSPHORYLATION [LARGE SCALE ANALYSIS] AT SER-219</scope>
    <scope>IDENTIFICATION BY MASS SPECTROMETRY [LARGE SCALE ANALYSIS]</scope>
</reference>
<evidence type="ECO:0000250" key="1"/>
<evidence type="ECO:0000250" key="2">
    <source>
        <dbReference type="UniProtKB" id="P49116"/>
    </source>
</evidence>
<evidence type="ECO:0000250" key="3">
    <source>
        <dbReference type="UniProtKB" id="P49117"/>
    </source>
</evidence>
<evidence type="ECO:0000255" key="4">
    <source>
        <dbReference type="PROSITE-ProRule" id="PRU00407"/>
    </source>
</evidence>
<evidence type="ECO:0000255" key="5">
    <source>
        <dbReference type="PROSITE-ProRule" id="PRU01189"/>
    </source>
</evidence>
<evidence type="ECO:0000269" key="6">
    <source>
    </source>
</evidence>
<evidence type="ECO:0000269" key="7">
    <source>
    </source>
</evidence>
<evidence type="ECO:0000305" key="8"/>
<evidence type="ECO:0007744" key="9">
    <source>
    </source>
</evidence>
<dbReference type="EMBL" id="L27513">
    <property type="protein sequence ID" value="AAA21475.1"/>
    <property type="molecule type" value="mRNA"/>
</dbReference>
<dbReference type="PIR" id="I80177">
    <property type="entry name" value="I80177"/>
</dbReference>
<dbReference type="RefSeq" id="NP_059019.1">
    <property type="nucleotide sequence ID" value="NM_017323.1"/>
</dbReference>
<dbReference type="FunCoup" id="P55094">
    <property type="interactions" value="4197"/>
</dbReference>
<dbReference type="STRING" id="10116.ENSRNOP00000014354"/>
<dbReference type="iPTMnet" id="P55094"/>
<dbReference type="PhosphoSitePlus" id="P55094"/>
<dbReference type="PaxDb" id="10116-ENSRNOP00000014354"/>
<dbReference type="GeneID" id="50659"/>
<dbReference type="KEGG" id="rno:50659"/>
<dbReference type="UCSC" id="RGD:3201">
    <property type="organism name" value="rat"/>
</dbReference>
<dbReference type="AGR" id="RGD:3201"/>
<dbReference type="CTD" id="7182"/>
<dbReference type="RGD" id="3201">
    <property type="gene designation" value="Nr2c2"/>
</dbReference>
<dbReference type="eggNOG" id="KOG3575">
    <property type="taxonomic scope" value="Eukaryota"/>
</dbReference>
<dbReference type="InParanoid" id="P55094"/>
<dbReference type="PhylomeDB" id="P55094"/>
<dbReference type="Reactome" id="R-RNO-383280">
    <property type="pathway name" value="Nuclear Receptor transcription pathway"/>
</dbReference>
<dbReference type="PRO" id="PR:P55094"/>
<dbReference type="Proteomes" id="UP000002494">
    <property type="component" value="Unplaced"/>
</dbReference>
<dbReference type="GO" id="GO:0005634">
    <property type="term" value="C:nucleus"/>
    <property type="evidence" value="ECO:0007669"/>
    <property type="project" value="UniProtKB-SubCell"/>
</dbReference>
<dbReference type="GO" id="GO:0001228">
    <property type="term" value="F:DNA-binding transcription activator activity, RNA polymerase II-specific"/>
    <property type="evidence" value="ECO:0000266"/>
    <property type="project" value="RGD"/>
</dbReference>
<dbReference type="GO" id="GO:0003700">
    <property type="term" value="F:DNA-binding transcription factor activity"/>
    <property type="evidence" value="ECO:0000266"/>
    <property type="project" value="RGD"/>
</dbReference>
<dbReference type="GO" id="GO:0004879">
    <property type="term" value="F:nuclear receptor activity"/>
    <property type="evidence" value="ECO:0000318"/>
    <property type="project" value="GO_Central"/>
</dbReference>
<dbReference type="GO" id="GO:0000978">
    <property type="term" value="F:RNA polymerase II cis-regulatory region sequence-specific DNA binding"/>
    <property type="evidence" value="ECO:0000266"/>
    <property type="project" value="RGD"/>
</dbReference>
<dbReference type="GO" id="GO:0000977">
    <property type="term" value="F:RNA polymerase II transcription regulatory region sequence-specific DNA binding"/>
    <property type="evidence" value="ECO:0000266"/>
    <property type="project" value="RGD"/>
</dbReference>
<dbReference type="GO" id="GO:0043565">
    <property type="term" value="F:sequence-specific DNA binding"/>
    <property type="evidence" value="ECO:0000266"/>
    <property type="project" value="RGD"/>
</dbReference>
<dbReference type="GO" id="GO:1990837">
    <property type="term" value="F:sequence-specific double-stranded DNA binding"/>
    <property type="evidence" value="ECO:0000266"/>
    <property type="project" value="RGD"/>
</dbReference>
<dbReference type="GO" id="GO:0008270">
    <property type="term" value="F:zinc ion binding"/>
    <property type="evidence" value="ECO:0007669"/>
    <property type="project" value="UniProtKB-KW"/>
</dbReference>
<dbReference type="GO" id="GO:0030154">
    <property type="term" value="P:cell differentiation"/>
    <property type="evidence" value="ECO:0000318"/>
    <property type="project" value="GO_Central"/>
</dbReference>
<dbReference type="GO" id="GO:0021549">
    <property type="term" value="P:cerebellum development"/>
    <property type="evidence" value="ECO:0000266"/>
    <property type="project" value="RGD"/>
</dbReference>
<dbReference type="GO" id="GO:0031663">
    <property type="term" value="P:lipopolysaccharide-mediated signaling pathway"/>
    <property type="evidence" value="ECO:0000266"/>
    <property type="project" value="RGD"/>
</dbReference>
<dbReference type="GO" id="GO:0051321">
    <property type="term" value="P:meiotic cell cycle"/>
    <property type="evidence" value="ECO:0000266"/>
    <property type="project" value="RGD"/>
</dbReference>
<dbReference type="GO" id="GO:0000122">
    <property type="term" value="P:negative regulation of transcription by RNA polymerase II"/>
    <property type="evidence" value="ECO:0000266"/>
    <property type="project" value="RGD"/>
</dbReference>
<dbReference type="GO" id="GO:0038066">
    <property type="term" value="P:p38MAPK cascade"/>
    <property type="evidence" value="ECO:0000266"/>
    <property type="project" value="RGD"/>
</dbReference>
<dbReference type="GO" id="GO:0048520">
    <property type="term" value="P:positive regulation of behavior"/>
    <property type="evidence" value="ECO:0000266"/>
    <property type="project" value="RGD"/>
</dbReference>
<dbReference type="GO" id="GO:0040019">
    <property type="term" value="P:positive regulation of embryonic development"/>
    <property type="evidence" value="ECO:0000266"/>
    <property type="project" value="RGD"/>
</dbReference>
<dbReference type="GO" id="GO:0045663">
    <property type="term" value="P:positive regulation of myoblast differentiation"/>
    <property type="evidence" value="ECO:0000266"/>
    <property type="project" value="RGD"/>
</dbReference>
<dbReference type="GO" id="GO:0045944">
    <property type="term" value="P:positive regulation of transcription by RNA polymerase II"/>
    <property type="evidence" value="ECO:0000266"/>
    <property type="project" value="RGD"/>
</dbReference>
<dbReference type="GO" id="GO:0007283">
    <property type="term" value="P:spermatogenesis"/>
    <property type="evidence" value="ECO:0000266"/>
    <property type="project" value="RGD"/>
</dbReference>
<dbReference type="CDD" id="cd06967">
    <property type="entry name" value="NR_DBD_TR2_like"/>
    <property type="match status" value="1"/>
</dbReference>
<dbReference type="CDD" id="cd06952">
    <property type="entry name" value="NR_LBD_TR2_like"/>
    <property type="match status" value="1"/>
</dbReference>
<dbReference type="FunFam" id="1.10.565.10:FF:000012">
    <property type="entry name" value="Nuclear receptor subfamily 2 group C member 1"/>
    <property type="match status" value="1"/>
</dbReference>
<dbReference type="FunFam" id="3.30.50.10:FF:000015">
    <property type="entry name" value="Nuclear receptor subfamily 2, group C, member 1"/>
    <property type="match status" value="1"/>
</dbReference>
<dbReference type="Gene3D" id="3.30.50.10">
    <property type="entry name" value="Erythroid Transcription Factor GATA-1, subunit A"/>
    <property type="match status" value="1"/>
</dbReference>
<dbReference type="Gene3D" id="1.10.565.10">
    <property type="entry name" value="Retinoid X Receptor"/>
    <property type="match status" value="1"/>
</dbReference>
<dbReference type="InterPro" id="IPR035500">
    <property type="entry name" value="NHR-like_dom_sf"/>
</dbReference>
<dbReference type="InterPro" id="IPR048245">
    <property type="entry name" value="NR2C1/2-like_DBD"/>
</dbReference>
<dbReference type="InterPro" id="IPR048246">
    <property type="entry name" value="NR2C1/2-like_LBD"/>
</dbReference>
<dbReference type="InterPro" id="IPR000536">
    <property type="entry name" value="Nucl_hrmn_rcpt_lig-bd"/>
</dbReference>
<dbReference type="InterPro" id="IPR050274">
    <property type="entry name" value="Nuclear_hormone_rcpt_NR2"/>
</dbReference>
<dbReference type="InterPro" id="IPR001723">
    <property type="entry name" value="Nuclear_hrmn_rcpt"/>
</dbReference>
<dbReference type="InterPro" id="IPR001628">
    <property type="entry name" value="Znf_hrmn_rcpt"/>
</dbReference>
<dbReference type="InterPro" id="IPR013088">
    <property type="entry name" value="Znf_NHR/GATA"/>
</dbReference>
<dbReference type="PANTHER" id="PTHR24083">
    <property type="entry name" value="NUCLEAR HORMONE RECEPTOR"/>
    <property type="match status" value="1"/>
</dbReference>
<dbReference type="Pfam" id="PF00104">
    <property type="entry name" value="Hormone_recep"/>
    <property type="match status" value="1"/>
</dbReference>
<dbReference type="Pfam" id="PF00105">
    <property type="entry name" value="zf-C4"/>
    <property type="match status" value="1"/>
</dbReference>
<dbReference type="PRINTS" id="PR00398">
    <property type="entry name" value="STRDHORMONER"/>
</dbReference>
<dbReference type="PRINTS" id="PR00047">
    <property type="entry name" value="STROIDFINGER"/>
</dbReference>
<dbReference type="SMART" id="SM00430">
    <property type="entry name" value="HOLI"/>
    <property type="match status" value="1"/>
</dbReference>
<dbReference type="SMART" id="SM00399">
    <property type="entry name" value="ZnF_C4"/>
    <property type="match status" value="1"/>
</dbReference>
<dbReference type="SUPFAM" id="SSF57716">
    <property type="entry name" value="Glucocorticoid receptor-like (DNA-binding domain)"/>
    <property type="match status" value="1"/>
</dbReference>
<dbReference type="SUPFAM" id="SSF48508">
    <property type="entry name" value="Nuclear receptor ligand-binding domain"/>
    <property type="match status" value="1"/>
</dbReference>
<dbReference type="PROSITE" id="PS51843">
    <property type="entry name" value="NR_LBD"/>
    <property type="match status" value="1"/>
</dbReference>
<dbReference type="PROSITE" id="PS00031">
    <property type="entry name" value="NUCLEAR_REC_DBD_1"/>
    <property type="match status" value="1"/>
</dbReference>
<dbReference type="PROSITE" id="PS51030">
    <property type="entry name" value="NUCLEAR_REC_DBD_2"/>
    <property type="match status" value="1"/>
</dbReference>
<proteinExistence type="evidence at protein level"/>
<sequence>MTSPSPRIQIISTDSAVRSPQRIQIVTDQQTGQKLQIVTAVDASGSSKQQFILTSPDGAGTGKVILASPETSSAKQLIFTTSDNLVPGRIQIVTDSASVERLLGKADVQRPQVVEYCVVCGDKASGRHYGAVSCEGCKGFFKRSVRKNLTYSCRSSQDCIINKHHRNRCQFCRLKKCLEMGMKMESVQSERKPFDVQREKPSNCAASTEKIYIRKDLRSPLIATPTFVADKDGSRQTGLLDPGMLVNIQQPLIREDGTVLLATDSKAETSQGALGTLANVVTSLANLSESLNNGDASEMQPEDQSASEITRAFDTLAKALNTTDSASPPSLADGIDASGGGSIHVISRDQSTPIIEVEGPLLSDTHVTFKLTMPSPMPEYLNVHYICESASRLLFLSMHWARSIPAFQALGQDCNTSLVRACWNELFTLGLAQCAQVMSLSTILAAIVNHLQNSIQEDKLSGDRIKQVMEHIWKLQEFCNSMAKLDIDGHEYAYLKAIVLFSPDHPGLTGTSQIEKFQEKAQMELQDYVQKTYSEDTYRLARILVRLPALRLMSSNITEELFFTGLIGNVSIDSIIPYILKMETAEYNGQITGASL</sequence>
<protein>
    <recommendedName>
        <fullName>Nuclear receptor subfamily 2 group C member 2</fullName>
    </recommendedName>
    <alternativeName>
        <fullName>Orphan nuclear receptor TR4</fullName>
    </alternativeName>
    <alternativeName>
        <fullName>Testicular receptor 4</fullName>
    </alternativeName>
</protein>
<keyword id="KW-0007">Acetylation</keyword>
<keyword id="KW-0010">Activator</keyword>
<keyword id="KW-0221">Differentiation</keyword>
<keyword id="KW-0238">DNA-binding</keyword>
<keyword id="KW-1017">Isopeptide bond</keyword>
<keyword id="KW-0479">Metal-binding</keyword>
<keyword id="KW-0539">Nucleus</keyword>
<keyword id="KW-0597">Phosphoprotein</keyword>
<keyword id="KW-0675">Receptor</keyword>
<keyword id="KW-1185">Reference proteome</keyword>
<keyword id="KW-0678">Repressor</keyword>
<keyword id="KW-0744">Spermatogenesis</keyword>
<keyword id="KW-0804">Transcription</keyword>
<keyword id="KW-0805">Transcription regulation</keyword>
<keyword id="KW-0832">Ubl conjugation</keyword>
<keyword id="KW-0862">Zinc</keyword>
<keyword id="KW-0863">Zinc-finger</keyword>
<comment type="function">
    <text evidence="1">Orphan nuclear receptor that can act as a repressor or activator of transcription. An important repressor of nuclear receptor signaling pathways such as retinoic acid receptor, retinoid X, vitamin D3 receptor, thyroid hormone receptor and estrogen receptor pathways. May regulate gene expression during the late phase of spermatogenesis. Activates transcriptional activity of LHCG and is antagonist of PPARA-mediated transactivation. Together with NR2C1, forms the core of the DRED (direct repeat erythroid-definitive) complex that represses embryonic and fetal globin transcription including that of GATA1. Binds to hormone response elements (HREs) consisting of two 5'-AGGTCA-3' half site direct repeat consensus sequences. Plays a fundamental role in early embryonic development and embryonic stem cells. Required for normal spermatogenesis and cerebellum development. Appears to be important for neurodevelopmentally regulated behavior (By similarity).</text>
</comment>
<comment type="subunit">
    <text evidence="2 3">Homodimer; can bind DNA as homodimer. Heterodimer; binds DNA as a heterodimer with NR2C1 required for chromatin remodeling and for binding to promoter regions such as globin DR1 repeats. Interacts with NR2C2AP; the interaction represses selective NR2C2-mediated transcriptional activity. Interacts with PCAF; the interaction preferentially occurs on the non-phosphorylated form and induces NR2C2-mediated transactivation activity and does not require the ligand-binding domain. Interacts (MAPK-mediated phosphorylated form) with NRIP1; the interaction promotes repression of NR2C2-mediated activity. Interacts with NLRP10. Interacts (via ligand-binding region) with transcriptional corepressor JAZF1; the interaction promotes NR2C2-mediated transcriptional repression.</text>
</comment>
<comment type="subcellular location">
    <subcellularLocation>
        <location evidence="4">Nucleus</location>
    </subcellularLocation>
</comment>
<comment type="tissue specificity">
    <text evidence="6 7">Expressed in hepatocytes. Also expressed in granule cells of the hippocampus and the cerebellum.</text>
</comment>
<comment type="PTM">
    <text evidence="1">Phosphorylation on Ser-19 and Ser-68 is an important regulator of NR2C2-mediated transcriptional activity. Phosphorylation on these residues recruits the corepressor, NRIP1, leading to transcripional repression, whereas the non-phosphorylated form preferentially recruits the coactivator, PCAF (By similarity).</text>
</comment>
<comment type="similarity">
    <text evidence="8">Belongs to the nuclear hormone receptor family. NR2 subfamily.</text>
</comment>
<name>NR2C2_RAT</name>
<gene>
    <name type="primary">Nr2c2</name>
    <name type="synonym">Tr4</name>
</gene>